<gene>
    <name evidence="1" type="primary">potA</name>
    <name type="ordered locus">RD1_4131</name>
</gene>
<organism>
    <name type="scientific">Roseobacter denitrificans (strain ATCC 33942 / OCh 114)</name>
    <name type="common">Erythrobacter sp. (strain OCh 114)</name>
    <name type="synonym">Roseobacter denitrificans</name>
    <dbReference type="NCBI Taxonomy" id="375451"/>
    <lineage>
        <taxon>Bacteria</taxon>
        <taxon>Pseudomonadati</taxon>
        <taxon>Pseudomonadota</taxon>
        <taxon>Alphaproteobacteria</taxon>
        <taxon>Rhodobacterales</taxon>
        <taxon>Roseobacteraceae</taxon>
        <taxon>Roseobacter</taxon>
    </lineage>
</organism>
<accession>Q160M2</accession>
<proteinExistence type="inferred from homology"/>
<name>POTA_ROSDO</name>
<keyword id="KW-0067">ATP-binding</keyword>
<keyword id="KW-0997">Cell inner membrane</keyword>
<keyword id="KW-1003">Cell membrane</keyword>
<keyword id="KW-0472">Membrane</keyword>
<keyword id="KW-0547">Nucleotide-binding</keyword>
<keyword id="KW-1185">Reference proteome</keyword>
<keyword id="KW-1278">Translocase</keyword>
<keyword id="KW-0813">Transport</keyword>
<dbReference type="EC" id="7.6.2.11" evidence="1"/>
<dbReference type="EMBL" id="CP000362">
    <property type="protein sequence ID" value="ABG33571.1"/>
    <property type="molecule type" value="Genomic_DNA"/>
</dbReference>
<dbReference type="RefSeq" id="WP_011570181.1">
    <property type="nucleotide sequence ID" value="NC_008209.1"/>
</dbReference>
<dbReference type="SMR" id="Q160M2"/>
<dbReference type="STRING" id="375451.RD1_4131"/>
<dbReference type="KEGG" id="rde:RD1_4131"/>
<dbReference type="eggNOG" id="COG3842">
    <property type="taxonomic scope" value="Bacteria"/>
</dbReference>
<dbReference type="HOGENOM" id="CLU_000604_1_1_5"/>
<dbReference type="OrthoDB" id="9802264at2"/>
<dbReference type="Proteomes" id="UP000007029">
    <property type="component" value="Chromosome"/>
</dbReference>
<dbReference type="GO" id="GO:0043190">
    <property type="term" value="C:ATP-binding cassette (ABC) transporter complex"/>
    <property type="evidence" value="ECO:0007669"/>
    <property type="project" value="InterPro"/>
</dbReference>
<dbReference type="GO" id="GO:0015594">
    <property type="term" value="F:ABC-type putrescine transporter activity"/>
    <property type="evidence" value="ECO:0007669"/>
    <property type="project" value="InterPro"/>
</dbReference>
<dbReference type="GO" id="GO:0005524">
    <property type="term" value="F:ATP binding"/>
    <property type="evidence" value="ECO:0007669"/>
    <property type="project" value="UniProtKB-KW"/>
</dbReference>
<dbReference type="GO" id="GO:0016887">
    <property type="term" value="F:ATP hydrolysis activity"/>
    <property type="evidence" value="ECO:0007669"/>
    <property type="project" value="InterPro"/>
</dbReference>
<dbReference type="CDD" id="cd03300">
    <property type="entry name" value="ABC_PotA_N"/>
    <property type="match status" value="1"/>
</dbReference>
<dbReference type="FunFam" id="3.40.50.300:FF:000133">
    <property type="entry name" value="Spermidine/putrescine import ATP-binding protein PotA"/>
    <property type="match status" value="1"/>
</dbReference>
<dbReference type="Gene3D" id="2.40.50.100">
    <property type="match status" value="1"/>
</dbReference>
<dbReference type="Gene3D" id="3.40.50.300">
    <property type="entry name" value="P-loop containing nucleotide triphosphate hydrolases"/>
    <property type="match status" value="1"/>
</dbReference>
<dbReference type="InterPro" id="IPR003593">
    <property type="entry name" value="AAA+_ATPase"/>
</dbReference>
<dbReference type="InterPro" id="IPR050093">
    <property type="entry name" value="ABC_SmlMolc_Importer"/>
</dbReference>
<dbReference type="InterPro" id="IPR003439">
    <property type="entry name" value="ABC_transporter-like_ATP-bd"/>
</dbReference>
<dbReference type="InterPro" id="IPR017871">
    <property type="entry name" value="ABC_transporter-like_CS"/>
</dbReference>
<dbReference type="InterPro" id="IPR008995">
    <property type="entry name" value="Mo/tungstate-bd_C_term_dom"/>
</dbReference>
<dbReference type="InterPro" id="IPR027417">
    <property type="entry name" value="P-loop_NTPase"/>
</dbReference>
<dbReference type="InterPro" id="IPR005893">
    <property type="entry name" value="PotA-like"/>
</dbReference>
<dbReference type="InterPro" id="IPR017879">
    <property type="entry name" value="PotA_ATP-bd"/>
</dbReference>
<dbReference type="InterPro" id="IPR013611">
    <property type="entry name" value="Transp-assoc_OB_typ2"/>
</dbReference>
<dbReference type="NCBIfam" id="TIGR01187">
    <property type="entry name" value="potA"/>
    <property type="match status" value="1"/>
</dbReference>
<dbReference type="PANTHER" id="PTHR42781">
    <property type="entry name" value="SPERMIDINE/PUTRESCINE IMPORT ATP-BINDING PROTEIN POTA"/>
    <property type="match status" value="1"/>
</dbReference>
<dbReference type="PANTHER" id="PTHR42781:SF4">
    <property type="entry name" value="SPERMIDINE_PUTRESCINE IMPORT ATP-BINDING PROTEIN POTA"/>
    <property type="match status" value="1"/>
</dbReference>
<dbReference type="Pfam" id="PF00005">
    <property type="entry name" value="ABC_tran"/>
    <property type="match status" value="1"/>
</dbReference>
<dbReference type="Pfam" id="PF08402">
    <property type="entry name" value="TOBE_2"/>
    <property type="match status" value="1"/>
</dbReference>
<dbReference type="SMART" id="SM00382">
    <property type="entry name" value="AAA"/>
    <property type="match status" value="1"/>
</dbReference>
<dbReference type="SUPFAM" id="SSF50331">
    <property type="entry name" value="MOP-like"/>
    <property type="match status" value="1"/>
</dbReference>
<dbReference type="SUPFAM" id="SSF52540">
    <property type="entry name" value="P-loop containing nucleoside triphosphate hydrolases"/>
    <property type="match status" value="1"/>
</dbReference>
<dbReference type="PROSITE" id="PS00211">
    <property type="entry name" value="ABC_TRANSPORTER_1"/>
    <property type="match status" value="1"/>
</dbReference>
<dbReference type="PROSITE" id="PS50893">
    <property type="entry name" value="ABC_TRANSPORTER_2"/>
    <property type="match status" value="1"/>
</dbReference>
<dbReference type="PROSITE" id="PS51305">
    <property type="entry name" value="POTA"/>
    <property type="match status" value="1"/>
</dbReference>
<evidence type="ECO:0000255" key="1">
    <source>
        <dbReference type="HAMAP-Rule" id="MF_01726"/>
    </source>
</evidence>
<reference key="1">
    <citation type="journal article" date="2007" name="J. Bacteriol.">
        <title>The complete genome sequence of Roseobacter denitrificans reveals a mixotrophic rather than photosynthetic metabolism.</title>
        <authorList>
            <person name="Swingley W.D."/>
            <person name="Sadekar S."/>
            <person name="Mastrian S.D."/>
            <person name="Matthies H.J."/>
            <person name="Hao J."/>
            <person name="Ramos H."/>
            <person name="Acharya C.R."/>
            <person name="Conrad A.L."/>
            <person name="Taylor H.L."/>
            <person name="Dejesa L.C."/>
            <person name="Shah M.K."/>
            <person name="O'Huallachain M.E."/>
            <person name="Lince M.T."/>
            <person name="Blankenship R.E."/>
            <person name="Beatty J.T."/>
            <person name="Touchman J.W."/>
        </authorList>
    </citation>
    <scope>NUCLEOTIDE SEQUENCE [LARGE SCALE GENOMIC DNA]</scope>
    <source>
        <strain>ATCC 33942 / OCh 114</strain>
    </source>
</reference>
<feature type="chain" id="PRO_0000286279" description="Spermidine/putrescine import ATP-binding protein PotA">
    <location>
        <begin position="1"/>
        <end position="363"/>
    </location>
</feature>
<feature type="domain" description="ABC transporter" evidence="1">
    <location>
        <begin position="9"/>
        <end position="239"/>
    </location>
</feature>
<feature type="binding site" evidence="1">
    <location>
        <begin position="41"/>
        <end position="48"/>
    </location>
    <ligand>
        <name>ATP</name>
        <dbReference type="ChEBI" id="CHEBI:30616"/>
    </ligand>
</feature>
<protein>
    <recommendedName>
        <fullName evidence="1">Spermidine/putrescine import ATP-binding protein PotA</fullName>
        <ecNumber evidence="1">7.6.2.11</ecNumber>
    </recommendedName>
</protein>
<comment type="function">
    <text evidence="1">Part of the ABC transporter complex PotABCD involved in spermidine/putrescine import. Responsible for energy coupling to the transport system.</text>
</comment>
<comment type="catalytic activity">
    <reaction evidence="1">
        <text>ATP + H2O + polyamine-[polyamine-binding protein]Side 1 = ADP + phosphate + polyamineSide 2 + [polyamine-binding protein]Side 1.</text>
        <dbReference type="EC" id="7.6.2.11"/>
    </reaction>
</comment>
<comment type="subunit">
    <text evidence="1">The complex is composed of two ATP-binding proteins (PotA), two transmembrane proteins (PotB and PotC) and a solute-binding protein (PotD).</text>
</comment>
<comment type="subcellular location">
    <subcellularLocation>
        <location evidence="1">Cell inner membrane</location>
        <topology evidence="1">Peripheral membrane protein</topology>
    </subcellularLocation>
</comment>
<comment type="similarity">
    <text evidence="1">Belongs to the ABC transporter superfamily. Spermidine/putrescine importer (TC 3.A.1.11.1) family.</text>
</comment>
<sequence length="363" mass="40242">MSHEVPNAIDVRNAVKRYGDFTALKTISLSIRDNEFFTLLGPSGCGKTTLLRMIAGFEDVTEGEIFLYGEEIEDLPPNRRPVNTVFQNYALFPHMDVMENVGFGLEMLGKPKAQARARAGEILELVQLSQFANRKPSQLSGGQQQRVALARALAPQPKVLLLDEPLSALDLKLRKAMQLELKHLQRETGITFIFVTHDQDEALTMSDRIAVMSAGELQQLGDARDIYEKPANRFVADFIGETNLFEVTIKSRDGTRVLCAFLNGLTLTCDAVAGMDVGDRVHMSIRPERIKLRSSKVETENFQAQVVENIYAGTDVQTIVHLQGGMPLAVRTQNSEIGRSMTFEPGAEVFVDVEFGSARLLAN</sequence>